<sequence>MASLALLRRTTLSHSHVRARAFSEGKSSNRHRIEKILVANRGEIACRITRTARRLGIQTVAVYSDADRDSLHVATADEAIRIGPPPARLSYLNGASIVDAAIRSGAQAIHPGYGFLSESADFAKLCEESGLTFIGPPASAIRDMGDKSASKRIMGAAGVPLVPGYHGYDQDIEKMKLEADRIGYPVLIKPTHGGGGKGMRIVHTPDEFVESFLAAQREAAASFGVNTILLEKYITRPRHIEVQIFGDKHGNVLHLYERDCSVQRRHQKIIEEAPAPNISADFRAQLGVAAVSAAKAVNYYNAGTVEFIVDTVSDEFYFMEMNTRLQVEHPVTEMIVGQDLVEWQILVANGEALPLSQSQVPLSGHAFEARIYAENVQKGFLPATGVLHHYHVPVSSAVRVETGVKEGDKVSMHYDPMIAKLVVWGENRAAALVKLKDSLSKFQVAGLPTNVNFLQKLANHRAFAIGNVETHFIDNYKEDLFVDANNSVSVKEAYEAARLNASLVAACLIEKEHFILARNPPGGSSLLPIWYSSPPFRIHHQAKRRMELEWDNEYGSGSSKIMKLTITYQPDGRYLIETEQNGSPVLEVKSTYVKDNYFRVEAAGVINDVNVAVYSKDQIRHIHIWQGSCHHYFREKLGLELSEDEESQHKPKVETSANPQGTVVAPMAGLVVKVLVENKTRVEEGQPVLVLEAMKMEHVVKAPSSGYVHGLQLMVGEQVSDGSVLFSVKDQ</sequence>
<feature type="transit peptide" description="Mitochondrion" evidence="4">
    <location>
        <begin position="1"/>
        <end position="22"/>
    </location>
</feature>
<feature type="chain" id="PRO_0000002836" description="Methylcrotonoyl-CoA carboxylase subunit alpha, mitochondrial">
    <location>
        <begin position="23"/>
        <end position="731"/>
    </location>
</feature>
<feature type="domain" description="Biotin carboxylation">
    <location>
        <begin position="32"/>
        <end position="478"/>
    </location>
</feature>
<feature type="domain" description="ATP-grasp" evidence="2">
    <location>
        <begin position="151"/>
        <end position="349"/>
    </location>
</feature>
<feature type="domain" description="Biotinyl-binding" evidence="3">
    <location>
        <begin position="653"/>
        <end position="729"/>
    </location>
</feature>
<feature type="active site" evidence="1">
    <location>
        <position position="324"/>
    </location>
</feature>
<feature type="binding site" evidence="1">
    <location>
        <position position="147"/>
    </location>
    <ligand>
        <name>ATP</name>
        <dbReference type="ChEBI" id="CHEBI:30616"/>
    </ligand>
</feature>
<feature type="binding site" evidence="1">
    <location>
        <position position="231"/>
    </location>
    <ligand>
        <name>ATP</name>
        <dbReference type="ChEBI" id="CHEBI:30616"/>
    </ligand>
</feature>
<feature type="binding site" evidence="1">
    <location>
        <position position="266"/>
    </location>
    <ligand>
        <name>ATP</name>
        <dbReference type="ChEBI" id="CHEBI:30616"/>
    </ligand>
</feature>
<feature type="binding site" evidence="1">
    <location>
        <position position="306"/>
    </location>
    <ligand>
        <name>Mn(2+)</name>
        <dbReference type="ChEBI" id="CHEBI:29035"/>
        <label>1</label>
    </ligand>
</feature>
<feature type="binding site" evidence="1">
    <location>
        <position position="320"/>
    </location>
    <ligand>
        <name>Mn(2+)</name>
        <dbReference type="ChEBI" id="CHEBI:29035"/>
        <label>1</label>
    </ligand>
</feature>
<feature type="binding site" evidence="1">
    <location>
        <position position="320"/>
    </location>
    <ligand>
        <name>Mn(2+)</name>
        <dbReference type="ChEBI" id="CHEBI:29035"/>
        <label>2</label>
    </ligand>
</feature>
<feature type="binding site" evidence="1">
    <location>
        <position position="322"/>
    </location>
    <ligand>
        <name>Mn(2+)</name>
        <dbReference type="ChEBI" id="CHEBI:29035"/>
        <label>2</label>
    </ligand>
</feature>
<feature type="modified residue" description="N6-biotinyllysine" evidence="1 3">
    <location>
        <position position="695"/>
    </location>
</feature>
<feature type="sequence conflict" description="In Ref. 1; AAA53141." evidence="5" ref="1">
    <original>R</original>
    <variation>K</variation>
    <location>
        <position position="68"/>
    </location>
</feature>
<feature type="sequence conflict" description="In Ref. 1; AAA53141." evidence="5" ref="1">
    <original>T</original>
    <variation>S</variation>
    <location>
        <position position="75"/>
    </location>
</feature>
<feature type="sequence conflict" description="In Ref. 1; AAA53141." evidence="5" ref="1">
    <original>E</original>
    <variation>K</variation>
    <location>
        <position position="78"/>
    </location>
</feature>
<reference key="1">
    <citation type="journal article" date="1994" name="Proc. Natl. Acad. Sci. U.S.A.">
        <title>Molecular cloning and characterization of the cDNA coding for the biotin-containing subunit of 3-methylcrotonoyl-CoA carboxylase: identification of the biotin carboxylase and biotin-carrier domains.</title>
        <authorList>
            <person name="Song J."/>
            <person name="Wurtele E.S."/>
            <person name="Nikolau B.J."/>
        </authorList>
    </citation>
    <scope>NUCLEOTIDE SEQUENCE [GENOMIC DNA / MRNA]</scope>
    <scope>PROTEIN SEQUENCE OF N-TERMINUS</scope>
    <source>
        <strain>cv. Corsoy 79</strain>
        <tissue>Cotyledon</tissue>
    </source>
</reference>
<dbReference type="EC" id="6.4.1.4"/>
<dbReference type="EMBL" id="U08469">
    <property type="protein sequence ID" value="AAA53140.1"/>
    <property type="molecule type" value="mRNA"/>
</dbReference>
<dbReference type="EMBL" id="U08846">
    <property type="protein sequence ID" value="AAA53141.1"/>
    <property type="molecule type" value="Genomic_DNA"/>
</dbReference>
<dbReference type="PIR" id="T06361">
    <property type="entry name" value="T06360"/>
</dbReference>
<dbReference type="SMR" id="Q42777"/>
<dbReference type="FunCoup" id="Q42777">
    <property type="interactions" value="5203"/>
</dbReference>
<dbReference type="STRING" id="3847.Q42777"/>
<dbReference type="PaxDb" id="3847-GLYMA02G16390.1"/>
<dbReference type="eggNOG" id="KOG0238">
    <property type="taxonomic scope" value="Eukaryota"/>
</dbReference>
<dbReference type="InParanoid" id="Q42777"/>
<dbReference type="UniPathway" id="UPA00363">
    <property type="reaction ID" value="UER00861"/>
</dbReference>
<dbReference type="Proteomes" id="UP000008827">
    <property type="component" value="Unplaced"/>
</dbReference>
<dbReference type="GO" id="GO:0005759">
    <property type="term" value="C:mitochondrial matrix"/>
    <property type="evidence" value="ECO:0007669"/>
    <property type="project" value="UniProtKB-SubCell"/>
</dbReference>
<dbReference type="GO" id="GO:0005739">
    <property type="term" value="C:mitochondrion"/>
    <property type="evidence" value="ECO:0000318"/>
    <property type="project" value="GO_Central"/>
</dbReference>
<dbReference type="GO" id="GO:0005524">
    <property type="term" value="F:ATP binding"/>
    <property type="evidence" value="ECO:0007669"/>
    <property type="project" value="UniProtKB-KW"/>
</dbReference>
<dbReference type="GO" id="GO:0046872">
    <property type="term" value="F:metal ion binding"/>
    <property type="evidence" value="ECO:0007669"/>
    <property type="project" value="UniProtKB-KW"/>
</dbReference>
<dbReference type="GO" id="GO:0004485">
    <property type="term" value="F:methylcrotonoyl-CoA carboxylase activity"/>
    <property type="evidence" value="ECO:0000314"/>
    <property type="project" value="CACAO"/>
</dbReference>
<dbReference type="GO" id="GO:0006552">
    <property type="term" value="P:L-leucine catabolic process"/>
    <property type="evidence" value="ECO:0007669"/>
    <property type="project" value="UniProtKB-UniPathway"/>
</dbReference>
<dbReference type="CDD" id="cd06850">
    <property type="entry name" value="biotinyl_domain"/>
    <property type="match status" value="1"/>
</dbReference>
<dbReference type="FunFam" id="2.40.50.100:FF:000003">
    <property type="entry name" value="Acetyl-CoA carboxylase biotin carboxyl carrier protein"/>
    <property type="match status" value="1"/>
</dbReference>
<dbReference type="FunFam" id="3.30.1490.20:FF:000003">
    <property type="entry name" value="acetyl-CoA carboxylase isoform X1"/>
    <property type="match status" value="1"/>
</dbReference>
<dbReference type="FunFam" id="3.30.470.20:FF:000028">
    <property type="entry name" value="Methylcrotonoyl-CoA carboxylase subunit alpha, mitochondrial"/>
    <property type="match status" value="1"/>
</dbReference>
<dbReference type="FunFam" id="3.40.50.20:FF:000010">
    <property type="entry name" value="Propionyl-CoA carboxylase subunit alpha"/>
    <property type="match status" value="1"/>
</dbReference>
<dbReference type="Gene3D" id="2.40.50.100">
    <property type="match status" value="1"/>
</dbReference>
<dbReference type="Gene3D" id="3.30.470.20">
    <property type="entry name" value="ATP-grasp fold, B domain"/>
    <property type="match status" value="1"/>
</dbReference>
<dbReference type="InterPro" id="IPR011761">
    <property type="entry name" value="ATP-grasp"/>
</dbReference>
<dbReference type="InterPro" id="IPR005481">
    <property type="entry name" value="BC-like_N"/>
</dbReference>
<dbReference type="InterPro" id="IPR001882">
    <property type="entry name" value="Biotin_BS"/>
</dbReference>
<dbReference type="InterPro" id="IPR050856">
    <property type="entry name" value="Biotin_carboxylase_complex"/>
</dbReference>
<dbReference type="InterPro" id="IPR011764">
    <property type="entry name" value="Biotin_carboxylation_dom"/>
</dbReference>
<dbReference type="InterPro" id="IPR005482">
    <property type="entry name" value="Biotin_COase_C"/>
</dbReference>
<dbReference type="InterPro" id="IPR000089">
    <property type="entry name" value="Biotin_lipoyl"/>
</dbReference>
<dbReference type="InterPro" id="IPR005479">
    <property type="entry name" value="CbamoylP_synth_lsu-like_ATP-bd"/>
</dbReference>
<dbReference type="InterPro" id="IPR045774">
    <property type="entry name" value="MCCA_BT_dom"/>
</dbReference>
<dbReference type="InterPro" id="IPR016185">
    <property type="entry name" value="PreATP-grasp_dom_sf"/>
</dbReference>
<dbReference type="InterPro" id="IPR011054">
    <property type="entry name" value="Rudment_hybrid_motif"/>
</dbReference>
<dbReference type="InterPro" id="IPR011053">
    <property type="entry name" value="Single_hybrid_motif"/>
</dbReference>
<dbReference type="NCBIfam" id="NF006367">
    <property type="entry name" value="PRK08591.1"/>
    <property type="match status" value="1"/>
</dbReference>
<dbReference type="PANTHER" id="PTHR18866">
    <property type="entry name" value="CARBOXYLASE:PYRUVATE/ACETYL-COA/PROPIONYL-COA CARBOXYLASE"/>
    <property type="match status" value="1"/>
</dbReference>
<dbReference type="PANTHER" id="PTHR18866:SF33">
    <property type="entry name" value="METHYLCROTONOYL-COA CARBOXYLASE SUBUNIT ALPHA, MITOCHONDRIAL-RELATED"/>
    <property type="match status" value="1"/>
</dbReference>
<dbReference type="Pfam" id="PF02785">
    <property type="entry name" value="Biotin_carb_C"/>
    <property type="match status" value="1"/>
</dbReference>
<dbReference type="Pfam" id="PF00289">
    <property type="entry name" value="Biotin_carb_N"/>
    <property type="match status" value="1"/>
</dbReference>
<dbReference type="Pfam" id="PF00364">
    <property type="entry name" value="Biotin_lipoyl"/>
    <property type="match status" value="1"/>
</dbReference>
<dbReference type="Pfam" id="PF02786">
    <property type="entry name" value="CPSase_L_D2"/>
    <property type="match status" value="1"/>
</dbReference>
<dbReference type="Pfam" id="PF19331">
    <property type="entry name" value="MCCA_BT"/>
    <property type="match status" value="1"/>
</dbReference>
<dbReference type="SMART" id="SM00878">
    <property type="entry name" value="Biotin_carb_C"/>
    <property type="match status" value="1"/>
</dbReference>
<dbReference type="SUPFAM" id="SSF56059">
    <property type="entry name" value="Glutathione synthetase ATP-binding domain-like"/>
    <property type="match status" value="1"/>
</dbReference>
<dbReference type="SUPFAM" id="SSF52440">
    <property type="entry name" value="PreATP-grasp domain"/>
    <property type="match status" value="1"/>
</dbReference>
<dbReference type="SUPFAM" id="SSF51246">
    <property type="entry name" value="Rudiment single hybrid motif"/>
    <property type="match status" value="1"/>
</dbReference>
<dbReference type="SUPFAM" id="SSF51230">
    <property type="entry name" value="Single hybrid motif"/>
    <property type="match status" value="1"/>
</dbReference>
<dbReference type="PROSITE" id="PS50975">
    <property type="entry name" value="ATP_GRASP"/>
    <property type="match status" value="1"/>
</dbReference>
<dbReference type="PROSITE" id="PS50979">
    <property type="entry name" value="BC"/>
    <property type="match status" value="1"/>
</dbReference>
<dbReference type="PROSITE" id="PS00188">
    <property type="entry name" value="BIOTIN"/>
    <property type="match status" value="1"/>
</dbReference>
<dbReference type="PROSITE" id="PS50968">
    <property type="entry name" value="BIOTINYL_LIPOYL"/>
    <property type="match status" value="1"/>
</dbReference>
<dbReference type="PROSITE" id="PS00866">
    <property type="entry name" value="CPSASE_1"/>
    <property type="match status" value="1"/>
</dbReference>
<dbReference type="PROSITE" id="PS00867">
    <property type="entry name" value="CPSASE_2"/>
    <property type="match status" value="1"/>
</dbReference>
<comment type="function">
    <text evidence="1">Biotin-attachment subunit of the 3-methylcrotonyl-CoA carboxylase, an enzyme that catalyzes the conversion of 3-methylcrotonyl-CoA to 3-methylglutaconyl-CoA, a critical step for leucine and isovaleric acid catabolism.</text>
</comment>
<comment type="catalytic activity">
    <reaction>
        <text>3-methylbut-2-enoyl-CoA + hydrogencarbonate + ATP = 3-methyl-(2E)-glutaconyl-CoA + ADP + phosphate + H(+)</text>
        <dbReference type="Rhea" id="RHEA:13589"/>
        <dbReference type="ChEBI" id="CHEBI:15378"/>
        <dbReference type="ChEBI" id="CHEBI:17544"/>
        <dbReference type="ChEBI" id="CHEBI:30616"/>
        <dbReference type="ChEBI" id="CHEBI:43474"/>
        <dbReference type="ChEBI" id="CHEBI:57344"/>
        <dbReference type="ChEBI" id="CHEBI:57346"/>
        <dbReference type="ChEBI" id="CHEBI:456216"/>
        <dbReference type="EC" id="6.4.1.4"/>
    </reaction>
</comment>
<comment type="cofactor">
    <cofactor>
        <name>biotin</name>
        <dbReference type="ChEBI" id="CHEBI:57586"/>
    </cofactor>
</comment>
<comment type="cofactor">
    <cofactor evidence="1">
        <name>Mn(2+)</name>
        <dbReference type="ChEBI" id="CHEBI:29035"/>
    </cofactor>
    <text evidence="1">Binds 2 manganese ions per subunit.</text>
</comment>
<comment type="pathway">
    <text>Amino-acid degradation; L-leucine degradation; (S)-3-hydroxy-3-methylglutaryl-CoA from 3-isovaleryl-CoA: step 2/3.</text>
</comment>
<comment type="subunit">
    <text evidence="1">Probably a heterodimer composed of biotin-containing alpha subunits and beta subunits.</text>
</comment>
<comment type="subcellular location">
    <subcellularLocation>
        <location>Mitochondrion matrix</location>
    </subcellularLocation>
</comment>
<comment type="tissue specificity">
    <text>In leaves, cotyledons and stems.</text>
</comment>
<proteinExistence type="evidence at protein level"/>
<accession>Q42777</accession>
<accession>Q42778</accession>
<name>MCCA_SOYBN</name>
<gene>
    <name type="primary">MCCA</name>
</gene>
<keyword id="KW-0067">ATP-binding</keyword>
<keyword id="KW-0092">Biotin</keyword>
<keyword id="KW-0903">Direct protein sequencing</keyword>
<keyword id="KW-0436">Ligase</keyword>
<keyword id="KW-0464">Manganese</keyword>
<keyword id="KW-0479">Metal-binding</keyword>
<keyword id="KW-0496">Mitochondrion</keyword>
<keyword id="KW-0547">Nucleotide-binding</keyword>
<keyword id="KW-1185">Reference proteome</keyword>
<keyword id="KW-0809">Transit peptide</keyword>
<protein>
    <recommendedName>
        <fullName>Methylcrotonoyl-CoA carboxylase subunit alpha, mitochondrial</fullName>
        <shortName>MCCase subunit alpha</shortName>
        <ecNumber>6.4.1.4</ecNumber>
    </recommendedName>
    <alternativeName>
        <fullName>3-methylcrotonyl-CoA carboxylase 1</fullName>
    </alternativeName>
    <alternativeName>
        <fullName>3-methylcrotonyl-CoA:carbon dioxide ligase subunit alpha</fullName>
    </alternativeName>
</protein>
<organism>
    <name type="scientific">Glycine max</name>
    <name type="common">Soybean</name>
    <name type="synonym">Glycine hispida</name>
    <dbReference type="NCBI Taxonomy" id="3847"/>
    <lineage>
        <taxon>Eukaryota</taxon>
        <taxon>Viridiplantae</taxon>
        <taxon>Streptophyta</taxon>
        <taxon>Embryophyta</taxon>
        <taxon>Tracheophyta</taxon>
        <taxon>Spermatophyta</taxon>
        <taxon>Magnoliopsida</taxon>
        <taxon>eudicotyledons</taxon>
        <taxon>Gunneridae</taxon>
        <taxon>Pentapetalae</taxon>
        <taxon>rosids</taxon>
        <taxon>fabids</taxon>
        <taxon>Fabales</taxon>
        <taxon>Fabaceae</taxon>
        <taxon>Papilionoideae</taxon>
        <taxon>50 kb inversion clade</taxon>
        <taxon>NPAAA clade</taxon>
        <taxon>indigoferoid/millettioid clade</taxon>
        <taxon>Phaseoleae</taxon>
        <taxon>Glycine</taxon>
        <taxon>Glycine subgen. Soja</taxon>
    </lineage>
</organism>
<evidence type="ECO:0000250" key="1"/>
<evidence type="ECO:0000255" key="2">
    <source>
        <dbReference type="PROSITE-ProRule" id="PRU00409"/>
    </source>
</evidence>
<evidence type="ECO:0000255" key="3">
    <source>
        <dbReference type="PROSITE-ProRule" id="PRU01066"/>
    </source>
</evidence>
<evidence type="ECO:0000269" key="4">
    <source>
    </source>
</evidence>
<evidence type="ECO:0000305" key="5"/>